<feature type="signal peptide" evidence="1">
    <location>
        <begin position="1"/>
        <end position="19"/>
    </location>
</feature>
<feature type="chain" id="PRO_5010295865" description="Lipoprotein LpqN" evidence="1">
    <location>
        <begin position="20"/>
        <end position="228"/>
    </location>
</feature>
<feature type="region of interest" description="Disordered" evidence="2">
    <location>
        <begin position="26"/>
        <end position="53"/>
    </location>
</feature>
<feature type="compositionally biased region" description="Low complexity" evidence="2">
    <location>
        <begin position="28"/>
        <end position="52"/>
    </location>
</feature>
<feature type="lipid moiety-binding region" description="N-palmitoyl cysteine" evidence="1">
    <location>
        <position position="20"/>
    </location>
</feature>
<feature type="lipid moiety-binding region" description="S-diacylglycerol cysteine" evidence="1">
    <location>
        <position position="20"/>
    </location>
</feature>
<feature type="helix" evidence="12">
    <location>
        <begin position="61"/>
        <end position="66"/>
    </location>
</feature>
<feature type="turn" evidence="12">
    <location>
        <begin position="67"/>
        <end position="69"/>
    </location>
</feature>
<feature type="strand" evidence="12">
    <location>
        <begin position="70"/>
        <end position="74"/>
    </location>
</feature>
<feature type="strand" evidence="12">
    <location>
        <begin position="84"/>
        <end position="86"/>
    </location>
</feature>
<feature type="strand" evidence="12">
    <location>
        <begin position="93"/>
        <end position="96"/>
    </location>
</feature>
<feature type="strand" evidence="12">
    <location>
        <begin position="100"/>
        <end position="102"/>
    </location>
</feature>
<feature type="strand" evidence="12">
    <location>
        <begin position="106"/>
        <end position="111"/>
    </location>
</feature>
<feature type="strand" evidence="12">
    <location>
        <begin position="120"/>
        <end position="131"/>
    </location>
</feature>
<feature type="helix" evidence="12">
    <location>
        <begin position="134"/>
        <end position="140"/>
    </location>
</feature>
<feature type="helix" evidence="12">
    <location>
        <begin position="143"/>
        <end position="146"/>
    </location>
</feature>
<feature type="strand" evidence="12">
    <location>
        <begin position="152"/>
        <end position="154"/>
    </location>
</feature>
<feature type="strand" evidence="12">
    <location>
        <begin position="158"/>
        <end position="162"/>
    </location>
</feature>
<feature type="strand" evidence="12">
    <location>
        <begin position="165"/>
        <end position="176"/>
    </location>
</feature>
<feature type="strand" evidence="12">
    <location>
        <begin position="179"/>
        <end position="192"/>
    </location>
</feature>
<feature type="strand" evidence="12">
    <location>
        <begin position="195"/>
        <end position="206"/>
    </location>
</feature>
<feature type="helix" evidence="12">
    <location>
        <begin position="207"/>
        <end position="209"/>
    </location>
</feature>
<feature type="helix" evidence="12">
    <location>
        <begin position="210"/>
        <end position="223"/>
    </location>
</feature>
<feature type="strand" evidence="12">
    <location>
        <begin position="225"/>
        <end position="227"/>
    </location>
</feature>
<protein>
    <recommendedName>
        <fullName evidence="6">Lipoprotein LpqN</fullName>
    </recommendedName>
</protein>
<dbReference type="EMBL" id="AL123456">
    <property type="protein sequence ID" value="CCP43321.1"/>
    <property type="molecule type" value="Genomic_DNA"/>
</dbReference>
<dbReference type="RefSeq" id="NP_215097.1">
    <property type="nucleotide sequence ID" value="NC_000962.3"/>
</dbReference>
<dbReference type="RefSeq" id="WP_003403052.1">
    <property type="nucleotide sequence ID" value="NZ_NVQJ01000033.1"/>
</dbReference>
<dbReference type="PDB" id="6E5D">
    <property type="method" value="X-ray"/>
    <property type="resolution" value="1.65 A"/>
    <property type="chains" value="A=1-228"/>
</dbReference>
<dbReference type="PDB" id="6E5F">
    <property type="method" value="X-ray"/>
    <property type="resolution" value="1.37 A"/>
    <property type="chains" value="A=1-228"/>
</dbReference>
<dbReference type="PDB" id="6MNA">
    <property type="method" value="X-ray"/>
    <property type="resolution" value="1.75 A"/>
    <property type="chains" value="A=1-228"/>
</dbReference>
<dbReference type="PDBsum" id="6E5D"/>
<dbReference type="PDBsum" id="6E5F"/>
<dbReference type="PDBsum" id="6MNA"/>
<dbReference type="SMR" id="O53780"/>
<dbReference type="STRING" id="83332.Rv0583c"/>
<dbReference type="PaxDb" id="83332-Rv0583c"/>
<dbReference type="DNASU" id="887733"/>
<dbReference type="GeneID" id="887733"/>
<dbReference type="KEGG" id="mtu:Rv0583c"/>
<dbReference type="KEGG" id="mtv:RVBD_0583c"/>
<dbReference type="PATRIC" id="fig|83332.111.peg.644"/>
<dbReference type="TubercuList" id="Rv0583c"/>
<dbReference type="eggNOG" id="ENOG5034BUD">
    <property type="taxonomic scope" value="Bacteria"/>
</dbReference>
<dbReference type="InParanoid" id="O53780"/>
<dbReference type="OrthoDB" id="3826775at2"/>
<dbReference type="Proteomes" id="UP000001584">
    <property type="component" value="Chromosome"/>
</dbReference>
<dbReference type="GO" id="GO:0005576">
    <property type="term" value="C:extracellular region"/>
    <property type="evidence" value="ECO:0007005"/>
    <property type="project" value="MTBBASE"/>
</dbReference>
<dbReference type="GO" id="GO:0009274">
    <property type="term" value="C:peptidoglycan-based cell wall"/>
    <property type="evidence" value="ECO:0007005"/>
    <property type="project" value="MTBBASE"/>
</dbReference>
<dbReference type="GO" id="GO:0005886">
    <property type="term" value="C:plasma membrane"/>
    <property type="evidence" value="ECO:0007005"/>
    <property type="project" value="MTBBASE"/>
</dbReference>
<dbReference type="GO" id="GO:0071555">
    <property type="term" value="P:cell wall organization"/>
    <property type="evidence" value="ECO:0007669"/>
    <property type="project" value="UniProtKB-KW"/>
</dbReference>
<dbReference type="Gene3D" id="3.40.1000.10">
    <property type="entry name" value="Mog1/PsbP, alpha/beta/alpha sandwich"/>
    <property type="match status" value="1"/>
</dbReference>
<dbReference type="InterPro" id="IPR019674">
    <property type="entry name" value="Lipoprotein_LpqN/LpqT-like"/>
</dbReference>
<dbReference type="Pfam" id="PF10738">
    <property type="entry name" value="Lpp-LpqN"/>
    <property type="match status" value="1"/>
</dbReference>
<dbReference type="PROSITE" id="PS51257">
    <property type="entry name" value="PROKAR_LIPOPROTEIN"/>
    <property type="match status" value="1"/>
</dbReference>
<sequence length="228" mass="23682">MKHFTAAVATVALSLALAGCSFNIKTDSAPTTSPTTTSPTTSTTTTSATTSAQAAGPNYTIADYIRDNHIQETPVHHGDPGSPTIDLPVPDDWRLLPESSRAPYGGIVYTQPADPNDPPTIVAILSKLTGDIDPAKVLQFAPGELKNLPGFQGSGDGSAATLGGFSAWQLGGSYSKNGKLRTVAQKTVVIPSQGAVFVLQLNADALDDETMTLMDAANVIDEQTTITP</sequence>
<keyword id="KW-0002">3D-structure</keyword>
<keyword id="KW-1003">Cell membrane</keyword>
<keyword id="KW-0961">Cell wall biogenesis/degradation</keyword>
<keyword id="KW-0449">Lipoprotein</keyword>
<keyword id="KW-0472">Membrane</keyword>
<keyword id="KW-0564">Palmitate</keyword>
<keyword id="KW-1185">Reference proteome</keyword>
<keyword id="KW-0964">Secreted</keyword>
<keyword id="KW-0732">Signal</keyword>
<keyword id="KW-0843">Virulence</keyword>
<proteinExistence type="evidence at protein level"/>
<reference key="1">
    <citation type="journal article" date="1998" name="Nature">
        <title>Deciphering the biology of Mycobacterium tuberculosis from the complete genome sequence.</title>
        <authorList>
            <person name="Cole S.T."/>
            <person name="Brosch R."/>
            <person name="Parkhill J."/>
            <person name="Garnier T."/>
            <person name="Churcher C.M."/>
            <person name="Harris D.E."/>
            <person name="Gordon S.V."/>
            <person name="Eiglmeier K."/>
            <person name="Gas S."/>
            <person name="Barry C.E. III"/>
            <person name="Tekaia F."/>
            <person name="Badcock K."/>
            <person name="Basham D."/>
            <person name="Brown D."/>
            <person name="Chillingworth T."/>
            <person name="Connor R."/>
            <person name="Davies R.M."/>
            <person name="Devlin K."/>
            <person name="Feltwell T."/>
            <person name="Gentles S."/>
            <person name="Hamlin N."/>
            <person name="Holroyd S."/>
            <person name="Hornsby T."/>
            <person name="Jagels K."/>
            <person name="Krogh A."/>
            <person name="McLean J."/>
            <person name="Moule S."/>
            <person name="Murphy L.D."/>
            <person name="Oliver S."/>
            <person name="Osborne J."/>
            <person name="Quail M.A."/>
            <person name="Rajandream M.A."/>
            <person name="Rogers J."/>
            <person name="Rutter S."/>
            <person name="Seeger K."/>
            <person name="Skelton S."/>
            <person name="Squares S."/>
            <person name="Squares R."/>
            <person name="Sulston J.E."/>
            <person name="Taylor K."/>
            <person name="Whitehead S."/>
            <person name="Barrell B.G."/>
        </authorList>
    </citation>
    <scope>NUCLEOTIDE SEQUENCE [LARGE SCALE GENOMIC DNA]</scope>
    <source>
        <strain>ATCC 25618 / H37Rv</strain>
    </source>
</reference>
<reference key="2">
    <citation type="journal article" date="2011" name="Mol. Cell. Proteomics">
        <title>Proteogenomic analysis of Mycobacterium tuberculosis by high resolution mass spectrometry.</title>
        <authorList>
            <person name="Kelkar D.S."/>
            <person name="Kumar D."/>
            <person name="Kumar P."/>
            <person name="Balakrishnan L."/>
            <person name="Muthusamy B."/>
            <person name="Yadav A.K."/>
            <person name="Shrivastava P."/>
            <person name="Marimuthu A."/>
            <person name="Anand S."/>
            <person name="Sundaram H."/>
            <person name="Kingsbury R."/>
            <person name="Harsha H.C."/>
            <person name="Nair B."/>
            <person name="Prasad T.S."/>
            <person name="Chauhan D.S."/>
            <person name="Katoch K."/>
            <person name="Katoch V.M."/>
            <person name="Kumar P."/>
            <person name="Chaerkady R."/>
            <person name="Ramachandran S."/>
            <person name="Dash D."/>
            <person name="Pandey A."/>
        </authorList>
    </citation>
    <scope>IDENTIFICATION BY MASS SPECTROMETRY [LARGE SCALE ANALYSIS]</scope>
    <source>
        <strain>ATCC 25618 / H37Rv</strain>
    </source>
</reference>
<reference key="3">
    <citation type="journal article" date="2018" name="Mol. Cell">
        <title>An Mtb-human protein-protein interaction map identifies a switch between host antiviral and antibacterial responses.</title>
        <authorList>
            <person name="Penn B.H."/>
            <person name="Netter Z."/>
            <person name="Johnson J.R."/>
            <person name="Von Dollen J."/>
            <person name="Jang G.M."/>
            <person name="Johnson T."/>
            <person name="Ohol Y.M."/>
            <person name="Maher C."/>
            <person name="Bell S.L."/>
            <person name="Geiger K."/>
            <person name="Golovkine G."/>
            <person name="Du X."/>
            <person name="Choi A."/>
            <person name="Parry T."/>
            <person name="Mohapatra B.C."/>
            <person name="Storck M.D."/>
            <person name="Band H."/>
            <person name="Chen C."/>
            <person name="Jaeger S."/>
            <person name="Shales M."/>
            <person name="Portnoy D.A."/>
            <person name="Hernandez R."/>
            <person name="Coscoy L."/>
            <person name="Cox J.S."/>
            <person name="Krogan N.J."/>
        </authorList>
    </citation>
    <scope>FUNCTION IN VIRULENCE</scope>
    <scope>INTERACTION WITH HOST CBL</scope>
    <scope>SUBCELLULAR LOCATION</scope>
    <scope>DISRUPTION PHENOTYPE</scope>
</reference>
<reference key="4">
    <citation type="journal article" date="2018" name="Mol. Cell">
        <title>Bacterial protein reshapes host defense toward antiviral responses.</title>
        <authorList>
            <person name="Eoh H."/>
            <person name="Jung J.U."/>
        </authorList>
    </citation>
    <scope>FUNCTION IN VIRULENCE</scope>
</reference>
<reference evidence="9 10 11" key="5">
    <citation type="journal article" date="2019" name="J. Biol. Chem.">
        <title>Structural and functional evidence that lipoprotein LpqN supports cell envelope biogenesis in Mycobacterium tuberculosis.</title>
        <authorList>
            <person name="Melly G.C."/>
            <person name="Stokas H."/>
            <person name="Dunaj J.L."/>
            <person name="Hsu F.F."/>
            <person name="Rajavel M."/>
            <person name="Su C.C."/>
            <person name="Yu E.W."/>
            <person name="Purdy G.E."/>
        </authorList>
    </citation>
    <scope>X-RAY CRYSTALLOGRAPHY (1.37 ANGSTROMS) OF APOPROTEIN AND IN COMPLEXES WITH DODECYL TREHALOSE AND TREHALOSE 6-DECANOATE</scope>
    <scope>FUNCTION</scope>
    <scope>INTERACTION WITH MMPL2; MMPL11 AND AG85</scope>
    <scope>DISRUPTION PHENOTYPE</scope>
</reference>
<organism>
    <name type="scientific">Mycobacterium tuberculosis (strain ATCC 25618 / H37Rv)</name>
    <dbReference type="NCBI Taxonomy" id="83332"/>
    <lineage>
        <taxon>Bacteria</taxon>
        <taxon>Bacillati</taxon>
        <taxon>Actinomycetota</taxon>
        <taxon>Actinomycetes</taxon>
        <taxon>Mycobacteriales</taxon>
        <taxon>Mycobacteriaceae</taxon>
        <taxon>Mycobacterium</taxon>
        <taxon>Mycobacterium tuberculosis complex</taxon>
    </lineage>
</organism>
<comment type="function">
    <text evidence="4">Involved in cell envelope biogenesis. May act as a membrane fusion protein, connecting MmpL transporters with periplasmic proteins, and play a role in cell envelope lipid changes during biofilm maturation.</text>
</comment>
<comment type="function">
    <text evidence="3 7">Is also a virulence factor required for intracellular survival (PubMed:30118682). Associates with CBL, a host ubiquitin ligase, and probably blocks the normal functions of CBL and disturbs CBL-mediated antibacterial activity (PubMed:30118682). Interaction counteracts antibacterial defense but causes a reciprocal enhancement of antiviral defense (PubMed:30118676, PubMed:30118682).</text>
</comment>
<comment type="subunit">
    <text evidence="3 4">Interacts with the periplasmic loop domains of the mycolate transporters MmpL3 and MmpL11. Also interacts with secreted cell envelope biosynthetic enzymes such as Ag85A. These interactions are weak and may require a putative mycobacterial adapter protein or molecule (PubMed:31471317). Interacts with human ubiquitin ligase CBL (PubMed:30118682).</text>
</comment>
<comment type="subcellular location">
    <subcellularLocation>
        <location evidence="1">Cell membrane</location>
        <topology evidence="1">Lipid-anchor</topology>
    </subcellularLocation>
    <subcellularLocation>
        <location evidence="3">Secreted</location>
    </subcellularLocation>
</comment>
<comment type="disruption phenotype">
    <text evidence="3 4">Deletion mutant grows at a normal rate and has a normal cell envelope lipid profile, but shows altered lipid profiles during biofilm maturation (PubMed:31471317). Mutant is attenuated in macrophages, but growth is restored when host CBL is removed (PubMed:30118682).</text>
</comment>
<evidence type="ECO:0000255" key="1">
    <source>
        <dbReference type="PROSITE-ProRule" id="PRU00303"/>
    </source>
</evidence>
<evidence type="ECO:0000256" key="2">
    <source>
        <dbReference type="SAM" id="MobiDB-lite"/>
    </source>
</evidence>
<evidence type="ECO:0000269" key="3">
    <source>
    </source>
</evidence>
<evidence type="ECO:0000269" key="4">
    <source>
    </source>
</evidence>
<evidence type="ECO:0000303" key="5">
    <source>
    </source>
</evidence>
<evidence type="ECO:0000305" key="6"/>
<evidence type="ECO:0000305" key="7">
    <source>
    </source>
</evidence>
<evidence type="ECO:0000312" key="8">
    <source>
        <dbReference type="EMBL" id="CCP43321.1"/>
    </source>
</evidence>
<evidence type="ECO:0007744" key="9">
    <source>
        <dbReference type="PDB" id="6E5D"/>
    </source>
</evidence>
<evidence type="ECO:0007744" key="10">
    <source>
        <dbReference type="PDB" id="6E5F"/>
    </source>
</evidence>
<evidence type="ECO:0007744" key="11">
    <source>
        <dbReference type="PDB" id="6MNA"/>
    </source>
</evidence>
<evidence type="ECO:0007829" key="12">
    <source>
        <dbReference type="PDB" id="6E5F"/>
    </source>
</evidence>
<accession>O53780</accession>
<accession>F2GMM8</accession>
<accession>I6WYS7</accession>
<accession>Q7D9L3</accession>
<name>LPQN_MYCTU</name>
<gene>
    <name evidence="5" type="primary">lpqN</name>
    <name evidence="8" type="ordered locus">Rv0583c</name>
</gene>